<sequence length="86" mass="9849">MVIWKVVNKAPLALIKFYRAILSPMFPPSCRFYPTCSAYALEAFETHNFFKASWLSLWRILRCNPFSKGGFDPVPPHDGVPGKKED</sequence>
<accession>Q3B109</accession>
<name>YIDD_CHLL3</name>
<gene>
    <name type="ordered locus">Plut_2130</name>
</gene>
<feature type="chain" id="PRO_0000253139" description="Putative membrane protein insertion efficiency factor">
    <location>
        <begin position="1"/>
        <end position="86"/>
    </location>
</feature>
<feature type="region of interest" description="Disordered" evidence="2">
    <location>
        <begin position="66"/>
        <end position="86"/>
    </location>
</feature>
<reference key="1">
    <citation type="submission" date="2005-08" db="EMBL/GenBank/DDBJ databases">
        <title>Complete sequence of Pelodictyon luteolum DSM 273.</title>
        <authorList>
            <consortium name="US DOE Joint Genome Institute"/>
            <person name="Copeland A."/>
            <person name="Lucas S."/>
            <person name="Lapidus A."/>
            <person name="Barry K."/>
            <person name="Detter J.C."/>
            <person name="Glavina T."/>
            <person name="Hammon N."/>
            <person name="Israni S."/>
            <person name="Pitluck S."/>
            <person name="Bryant D."/>
            <person name="Schmutz J."/>
            <person name="Larimer F."/>
            <person name="Land M."/>
            <person name="Kyrpides N."/>
            <person name="Ivanova N."/>
            <person name="Richardson P."/>
        </authorList>
    </citation>
    <scope>NUCLEOTIDE SEQUENCE [LARGE SCALE GENOMIC DNA]</scope>
    <source>
        <strain>DSM 273 / BCRC 81028 / 2530</strain>
    </source>
</reference>
<organism>
    <name type="scientific">Chlorobium luteolum (strain DSM 273 / BCRC 81028 / 2530)</name>
    <name type="common">Pelodictyon luteolum</name>
    <dbReference type="NCBI Taxonomy" id="319225"/>
    <lineage>
        <taxon>Bacteria</taxon>
        <taxon>Pseudomonadati</taxon>
        <taxon>Chlorobiota</taxon>
        <taxon>Chlorobiia</taxon>
        <taxon>Chlorobiales</taxon>
        <taxon>Chlorobiaceae</taxon>
        <taxon>Chlorobium/Pelodictyon group</taxon>
        <taxon>Pelodictyon</taxon>
    </lineage>
</organism>
<evidence type="ECO:0000255" key="1">
    <source>
        <dbReference type="HAMAP-Rule" id="MF_00386"/>
    </source>
</evidence>
<evidence type="ECO:0000256" key="2">
    <source>
        <dbReference type="SAM" id="MobiDB-lite"/>
    </source>
</evidence>
<dbReference type="EMBL" id="CP000096">
    <property type="protein sequence ID" value="ABB24972.1"/>
    <property type="molecule type" value="Genomic_DNA"/>
</dbReference>
<dbReference type="RefSeq" id="WP_011358842.1">
    <property type="nucleotide sequence ID" value="NC_007512.1"/>
</dbReference>
<dbReference type="STRING" id="319225.Plut_2130"/>
<dbReference type="KEGG" id="plt:Plut_2130"/>
<dbReference type="eggNOG" id="COG0759">
    <property type="taxonomic scope" value="Bacteria"/>
</dbReference>
<dbReference type="HOGENOM" id="CLU_144811_6_0_10"/>
<dbReference type="OrthoDB" id="9801753at2"/>
<dbReference type="Proteomes" id="UP000002709">
    <property type="component" value="Chromosome"/>
</dbReference>
<dbReference type="GO" id="GO:0005886">
    <property type="term" value="C:plasma membrane"/>
    <property type="evidence" value="ECO:0007669"/>
    <property type="project" value="UniProtKB-SubCell"/>
</dbReference>
<dbReference type="HAMAP" id="MF_00386">
    <property type="entry name" value="UPF0161_YidD"/>
    <property type="match status" value="1"/>
</dbReference>
<dbReference type="InterPro" id="IPR002696">
    <property type="entry name" value="Membr_insert_effic_factor_YidD"/>
</dbReference>
<dbReference type="NCBIfam" id="TIGR00278">
    <property type="entry name" value="membrane protein insertion efficiency factor YidD"/>
    <property type="match status" value="1"/>
</dbReference>
<dbReference type="PANTHER" id="PTHR33383">
    <property type="entry name" value="MEMBRANE PROTEIN INSERTION EFFICIENCY FACTOR-RELATED"/>
    <property type="match status" value="1"/>
</dbReference>
<dbReference type="PANTHER" id="PTHR33383:SF1">
    <property type="entry name" value="MEMBRANE PROTEIN INSERTION EFFICIENCY FACTOR-RELATED"/>
    <property type="match status" value="1"/>
</dbReference>
<dbReference type="Pfam" id="PF01809">
    <property type="entry name" value="YidD"/>
    <property type="match status" value="1"/>
</dbReference>
<dbReference type="SMART" id="SM01234">
    <property type="entry name" value="Haemolytic"/>
    <property type="match status" value="1"/>
</dbReference>
<comment type="function">
    <text evidence="1">Could be involved in insertion of integral membrane proteins into the membrane.</text>
</comment>
<comment type="subcellular location">
    <subcellularLocation>
        <location evidence="1">Cell inner membrane</location>
        <topology evidence="1">Peripheral membrane protein</topology>
        <orientation evidence="1">Cytoplasmic side</orientation>
    </subcellularLocation>
</comment>
<comment type="similarity">
    <text evidence="1">Belongs to the UPF0161 family.</text>
</comment>
<protein>
    <recommendedName>
        <fullName evidence="1">Putative membrane protein insertion efficiency factor</fullName>
    </recommendedName>
</protein>
<keyword id="KW-0997">Cell inner membrane</keyword>
<keyword id="KW-1003">Cell membrane</keyword>
<keyword id="KW-0472">Membrane</keyword>
<keyword id="KW-1185">Reference proteome</keyword>
<proteinExistence type="inferred from homology"/>